<protein>
    <recommendedName>
        <fullName>Alkaline ceramidase</fullName>
        <shortName>AlkCDase</shortName>
        <ecNumber>3.5.1.23</ecNumber>
    </recommendedName>
    <alternativeName>
        <fullName>Alkaline N-acylsphingosine amidohydrolase</fullName>
    </alternativeName>
    <alternativeName>
        <fullName>Alkaline acylsphingosine deacylase</fullName>
    </alternativeName>
</protein>
<reference key="1">
    <citation type="journal article" date="2003" name="PLoS Biol.">
        <title>The genome sequence of Caenorhabditis briggsae: a platform for comparative genomics.</title>
        <authorList>
            <person name="Stein L.D."/>
            <person name="Bao Z."/>
            <person name="Blasiar D."/>
            <person name="Blumenthal T."/>
            <person name="Brent M.R."/>
            <person name="Chen N."/>
            <person name="Chinwalla A."/>
            <person name="Clarke L."/>
            <person name="Clee C."/>
            <person name="Coghlan A."/>
            <person name="Coulson A."/>
            <person name="D'Eustachio P."/>
            <person name="Fitch D.H.A."/>
            <person name="Fulton L.A."/>
            <person name="Fulton R.E."/>
            <person name="Griffiths-Jones S."/>
            <person name="Harris T.W."/>
            <person name="Hillier L.W."/>
            <person name="Kamath R."/>
            <person name="Kuwabara P.E."/>
            <person name="Mardis E.R."/>
            <person name="Marra M.A."/>
            <person name="Miner T.L."/>
            <person name="Minx P."/>
            <person name="Mullikin J.C."/>
            <person name="Plumb R.W."/>
            <person name="Rogers J."/>
            <person name="Schein J.E."/>
            <person name="Sohrmann M."/>
            <person name="Spieth J."/>
            <person name="Stajich J.E."/>
            <person name="Wei C."/>
            <person name="Willey D."/>
            <person name="Wilson R.K."/>
            <person name="Durbin R.M."/>
            <person name="Waterston R.H."/>
        </authorList>
    </citation>
    <scope>NUCLEOTIDE SEQUENCE [LARGE SCALE GENOMIC DNA]</scope>
    <source>
        <strain>AF16</strain>
    </source>
</reference>
<gene>
    <name type="ORF">CBG18997</name>
</gene>
<feature type="chain" id="PRO_0000247750" description="Alkaline ceramidase">
    <location>
        <begin position="1"/>
        <end position="272"/>
    </location>
</feature>
<feature type="transmembrane region" description="Helical" evidence="3">
    <location>
        <begin position="34"/>
        <end position="54"/>
    </location>
</feature>
<feature type="transmembrane region" description="Helical" evidence="3">
    <location>
        <begin position="61"/>
        <end position="81"/>
    </location>
</feature>
<feature type="transmembrane region" description="Helical" evidence="3">
    <location>
        <begin position="96"/>
        <end position="116"/>
    </location>
</feature>
<feature type="transmembrane region" description="Helical" evidence="3">
    <location>
        <begin position="124"/>
        <end position="144"/>
    </location>
</feature>
<feature type="transmembrane region" description="Helical" evidence="3">
    <location>
        <begin position="148"/>
        <end position="168"/>
    </location>
</feature>
<feature type="transmembrane region" description="Helical" evidence="3">
    <location>
        <begin position="183"/>
        <end position="203"/>
    </location>
</feature>
<feature type="transmembrane region" description="Helical" evidence="3">
    <location>
        <begin position="214"/>
        <end position="234"/>
    </location>
</feature>
<feature type="binding site" evidence="2">
    <location>
        <position position="83"/>
    </location>
    <ligand>
        <name>Zn(2+)</name>
        <dbReference type="ChEBI" id="CHEBI:29105"/>
        <note>catalytic</note>
    </ligand>
</feature>
<feature type="binding site" evidence="2">
    <location>
        <position position="213"/>
    </location>
    <ligand>
        <name>Zn(2+)</name>
        <dbReference type="ChEBI" id="CHEBI:29105"/>
        <note>catalytic</note>
    </ligand>
</feature>
<feature type="binding site" evidence="2">
    <location>
        <position position="217"/>
    </location>
    <ligand>
        <name>Zn(2+)</name>
        <dbReference type="ChEBI" id="CHEBI:29105"/>
        <note>catalytic</note>
    </ligand>
</feature>
<feature type="glycosylation site" description="N-linked (GlcNAc...) asparagine" evidence="3">
    <location>
        <position position="256"/>
    </location>
</feature>
<organism>
    <name type="scientific">Caenorhabditis briggsae</name>
    <dbReference type="NCBI Taxonomy" id="6238"/>
    <lineage>
        <taxon>Eukaryota</taxon>
        <taxon>Metazoa</taxon>
        <taxon>Ecdysozoa</taxon>
        <taxon>Nematoda</taxon>
        <taxon>Chromadorea</taxon>
        <taxon>Rhabditida</taxon>
        <taxon>Rhabditina</taxon>
        <taxon>Rhabditomorpha</taxon>
        <taxon>Rhabditoidea</taxon>
        <taxon>Rhabditidae</taxon>
        <taxon>Peloderinae</taxon>
        <taxon>Caenorhabditis</taxon>
    </lineage>
</organism>
<proteinExistence type="inferred from homology"/>
<sequence>MDSSSISRWFEYESGHAWCESAYKYQTLPYVAEFANTCTNLPIIVLPLVNIMLLRRYLHDVNGGLVFPQLLLTFNGLASTYYHATLNLFGQLVDELSLVWIITVFLVVYIPVMKWFPERFSKRLTVVRWVVLIVTAVVSALCFLEPNLNAIALMLFSIPAAVVIRYEGKQSGIPDIENFPSRILALWGVAFSFWFADRLLCDFWLYLGTPYLHALFHLLAGLAGYTIFIMFSMIDIESRSKTHRYTAAVRYFPDKNGSIFSFPYISLKERSQ</sequence>
<accession>Q60WT2</accession>
<accession>A8XUJ1</accession>
<evidence type="ECO:0000250" key="1"/>
<evidence type="ECO:0000250" key="2">
    <source>
        <dbReference type="UniProtKB" id="Q9NUN7"/>
    </source>
</evidence>
<evidence type="ECO:0000255" key="3"/>
<evidence type="ECO:0000305" key="4"/>
<name>ACASE_CAEBR</name>
<dbReference type="EC" id="3.5.1.23"/>
<dbReference type="EMBL" id="HE601047">
    <property type="protein sequence ID" value="CAP36316.2"/>
    <property type="molecule type" value="Genomic_DNA"/>
</dbReference>
<dbReference type="RefSeq" id="XP_002637308.2">
    <property type="nucleotide sequence ID" value="XM_002637262.2"/>
</dbReference>
<dbReference type="SMR" id="Q60WT2"/>
<dbReference type="FunCoup" id="Q60WT2">
    <property type="interactions" value="733"/>
</dbReference>
<dbReference type="STRING" id="6238.Q60WT2"/>
<dbReference type="GeneID" id="8579303"/>
<dbReference type="WormBase" id="CBG18997">
    <property type="protein sequence ID" value="CBP46843"/>
    <property type="gene ID" value="WBGene00038287"/>
</dbReference>
<dbReference type="eggNOG" id="KOG2329">
    <property type="taxonomic scope" value="Eukaryota"/>
</dbReference>
<dbReference type="HOGENOM" id="CLU_088280_0_0_1"/>
<dbReference type="InParanoid" id="Q60WT2"/>
<dbReference type="OMA" id="TFCFVKP"/>
<dbReference type="Proteomes" id="UP000008549">
    <property type="component" value="Unassembled WGS sequence"/>
</dbReference>
<dbReference type="GO" id="GO:0016020">
    <property type="term" value="C:membrane"/>
    <property type="evidence" value="ECO:0007669"/>
    <property type="project" value="UniProtKB-SubCell"/>
</dbReference>
<dbReference type="GO" id="GO:0046872">
    <property type="term" value="F:metal ion binding"/>
    <property type="evidence" value="ECO:0007669"/>
    <property type="project" value="UniProtKB-KW"/>
</dbReference>
<dbReference type="GO" id="GO:0017040">
    <property type="term" value="F:N-acylsphingosine amidohydrolase activity"/>
    <property type="evidence" value="ECO:0007669"/>
    <property type="project" value="UniProtKB-EC"/>
</dbReference>
<dbReference type="GO" id="GO:0046514">
    <property type="term" value="P:ceramide catabolic process"/>
    <property type="evidence" value="ECO:0000318"/>
    <property type="project" value="GO_Central"/>
</dbReference>
<dbReference type="InterPro" id="IPR008901">
    <property type="entry name" value="ACER"/>
</dbReference>
<dbReference type="PANTHER" id="PTHR46139">
    <property type="entry name" value="ALKALINE CERAMIDASE"/>
    <property type="match status" value="1"/>
</dbReference>
<dbReference type="PANTHER" id="PTHR46139:SF3">
    <property type="entry name" value="ALKALINE CERAMIDASE"/>
    <property type="match status" value="1"/>
</dbReference>
<dbReference type="Pfam" id="PF05875">
    <property type="entry name" value="Ceramidase"/>
    <property type="match status" value="1"/>
</dbReference>
<comment type="function">
    <text evidence="1">Hydrolyzes the sphingolipid ceramide into sphingosine and free fatty acid.</text>
</comment>
<comment type="catalytic activity">
    <reaction>
        <text>an N-acylsphing-4-enine + H2O = sphing-4-enine + a fatty acid</text>
        <dbReference type="Rhea" id="RHEA:20856"/>
        <dbReference type="ChEBI" id="CHEBI:15377"/>
        <dbReference type="ChEBI" id="CHEBI:28868"/>
        <dbReference type="ChEBI" id="CHEBI:52639"/>
        <dbReference type="ChEBI" id="CHEBI:57756"/>
        <dbReference type="EC" id="3.5.1.23"/>
    </reaction>
</comment>
<comment type="cofactor">
    <cofactor evidence="2">
        <name>Zn(2+)</name>
        <dbReference type="ChEBI" id="CHEBI:29105"/>
    </cofactor>
</comment>
<comment type="subcellular location">
    <subcellularLocation>
        <location evidence="4">Membrane</location>
        <topology evidence="4">Multi-pass membrane protein</topology>
    </subcellularLocation>
</comment>
<comment type="similarity">
    <text evidence="4">Belongs to the alkaline ceramidase family.</text>
</comment>
<keyword id="KW-0325">Glycoprotein</keyword>
<keyword id="KW-0378">Hydrolase</keyword>
<keyword id="KW-0443">Lipid metabolism</keyword>
<keyword id="KW-0472">Membrane</keyword>
<keyword id="KW-0479">Metal-binding</keyword>
<keyword id="KW-1185">Reference proteome</keyword>
<keyword id="KW-0812">Transmembrane</keyword>
<keyword id="KW-1133">Transmembrane helix</keyword>
<keyword id="KW-0862">Zinc</keyword>